<dbReference type="EC" id="4.1.99.17" evidence="1"/>
<dbReference type="EMBL" id="CP000232">
    <property type="protein sequence ID" value="ABC19714.1"/>
    <property type="molecule type" value="Genomic_DNA"/>
</dbReference>
<dbReference type="RefSeq" id="YP_430257.1">
    <property type="nucleotide sequence ID" value="NC_007644.1"/>
</dbReference>
<dbReference type="SMR" id="Q2RIM5"/>
<dbReference type="STRING" id="264732.Moth_1401"/>
<dbReference type="EnsemblBacteria" id="ABC19714">
    <property type="protein sequence ID" value="ABC19714"/>
    <property type="gene ID" value="Moth_1401"/>
</dbReference>
<dbReference type="KEGG" id="mta:Moth_1401"/>
<dbReference type="PATRIC" id="fig|264732.11.peg.1506"/>
<dbReference type="eggNOG" id="COG0422">
    <property type="taxonomic scope" value="Bacteria"/>
</dbReference>
<dbReference type="HOGENOM" id="CLU_013181_2_2_9"/>
<dbReference type="OrthoDB" id="9805897at2"/>
<dbReference type="UniPathway" id="UPA00060"/>
<dbReference type="GO" id="GO:0005829">
    <property type="term" value="C:cytosol"/>
    <property type="evidence" value="ECO:0007669"/>
    <property type="project" value="TreeGrafter"/>
</dbReference>
<dbReference type="GO" id="GO:0051539">
    <property type="term" value="F:4 iron, 4 sulfur cluster binding"/>
    <property type="evidence" value="ECO:0007669"/>
    <property type="project" value="UniProtKB-KW"/>
</dbReference>
<dbReference type="GO" id="GO:0016830">
    <property type="term" value="F:carbon-carbon lyase activity"/>
    <property type="evidence" value="ECO:0007669"/>
    <property type="project" value="InterPro"/>
</dbReference>
<dbReference type="GO" id="GO:0008270">
    <property type="term" value="F:zinc ion binding"/>
    <property type="evidence" value="ECO:0007669"/>
    <property type="project" value="UniProtKB-UniRule"/>
</dbReference>
<dbReference type="GO" id="GO:0009228">
    <property type="term" value="P:thiamine biosynthetic process"/>
    <property type="evidence" value="ECO:0007669"/>
    <property type="project" value="UniProtKB-KW"/>
</dbReference>
<dbReference type="GO" id="GO:0009229">
    <property type="term" value="P:thiamine diphosphate biosynthetic process"/>
    <property type="evidence" value="ECO:0007669"/>
    <property type="project" value="UniProtKB-UniRule"/>
</dbReference>
<dbReference type="FunFam" id="3.20.20.540:FF:000001">
    <property type="entry name" value="Phosphomethylpyrimidine synthase"/>
    <property type="match status" value="1"/>
</dbReference>
<dbReference type="Gene3D" id="6.10.250.620">
    <property type="match status" value="1"/>
</dbReference>
<dbReference type="Gene3D" id="3.20.20.540">
    <property type="entry name" value="Radical SAM ThiC family, central domain"/>
    <property type="match status" value="1"/>
</dbReference>
<dbReference type="HAMAP" id="MF_00089">
    <property type="entry name" value="ThiC"/>
    <property type="match status" value="1"/>
</dbReference>
<dbReference type="InterPro" id="IPR037509">
    <property type="entry name" value="ThiC"/>
</dbReference>
<dbReference type="InterPro" id="IPR038521">
    <property type="entry name" value="ThiC/Bza_core_dom"/>
</dbReference>
<dbReference type="InterPro" id="IPR002817">
    <property type="entry name" value="ThiC/BzaA/B"/>
</dbReference>
<dbReference type="NCBIfam" id="NF009895">
    <property type="entry name" value="PRK13352.1"/>
    <property type="match status" value="1"/>
</dbReference>
<dbReference type="NCBIfam" id="TIGR00190">
    <property type="entry name" value="thiC"/>
    <property type="match status" value="1"/>
</dbReference>
<dbReference type="PANTHER" id="PTHR30557:SF1">
    <property type="entry name" value="PHOSPHOMETHYLPYRIMIDINE SYNTHASE, CHLOROPLASTIC"/>
    <property type="match status" value="1"/>
</dbReference>
<dbReference type="PANTHER" id="PTHR30557">
    <property type="entry name" value="THIAMINE BIOSYNTHESIS PROTEIN THIC"/>
    <property type="match status" value="1"/>
</dbReference>
<dbReference type="Pfam" id="PF01964">
    <property type="entry name" value="ThiC_Rad_SAM"/>
    <property type="match status" value="1"/>
</dbReference>
<dbReference type="SFLD" id="SFLDF00407">
    <property type="entry name" value="phosphomethylpyrimidine_syntha"/>
    <property type="match status" value="1"/>
</dbReference>
<dbReference type="SFLD" id="SFLDG01114">
    <property type="entry name" value="phosphomethylpyrimidine_syntha"/>
    <property type="match status" value="1"/>
</dbReference>
<dbReference type="SFLD" id="SFLDS00113">
    <property type="entry name" value="Radical_SAM_Phosphomethylpyrim"/>
    <property type="match status" value="1"/>
</dbReference>
<protein>
    <recommendedName>
        <fullName evidence="1">Phosphomethylpyrimidine synthase</fullName>
        <ecNumber evidence="1">4.1.99.17</ecNumber>
    </recommendedName>
    <alternativeName>
        <fullName evidence="1">Hydroxymethylpyrimidine phosphate synthase</fullName>
        <shortName evidence="1">HMP-P synthase</shortName>
        <shortName evidence="1">HMP-phosphate synthase</shortName>
        <shortName evidence="1">HMPP synthase</shortName>
    </alternativeName>
    <alternativeName>
        <fullName evidence="1">Thiamine biosynthesis protein ThiC</fullName>
    </alternativeName>
</protein>
<feature type="chain" id="PRO_0000242272" description="Phosphomethylpyrimidine synthase">
    <location>
        <begin position="1"/>
        <end position="432"/>
    </location>
</feature>
<feature type="binding site" evidence="1">
    <location>
        <position position="66"/>
    </location>
    <ligand>
        <name>substrate</name>
    </ligand>
</feature>
<feature type="binding site" evidence="1">
    <location>
        <position position="95"/>
    </location>
    <ligand>
        <name>substrate</name>
    </ligand>
</feature>
<feature type="binding site" evidence="1">
    <location>
        <position position="124"/>
    </location>
    <ligand>
        <name>substrate</name>
    </ligand>
</feature>
<feature type="binding site" evidence="1">
    <location>
        <position position="163"/>
    </location>
    <ligand>
        <name>substrate</name>
    </ligand>
</feature>
<feature type="binding site" evidence="1">
    <location>
        <begin position="185"/>
        <end position="187"/>
    </location>
    <ligand>
        <name>substrate</name>
    </ligand>
</feature>
<feature type="binding site" evidence="1">
    <location>
        <begin position="226"/>
        <end position="229"/>
    </location>
    <ligand>
        <name>substrate</name>
    </ligand>
</feature>
<feature type="binding site" evidence="1">
    <location>
        <position position="265"/>
    </location>
    <ligand>
        <name>substrate</name>
    </ligand>
</feature>
<feature type="binding site" evidence="1">
    <location>
        <position position="269"/>
    </location>
    <ligand>
        <name>Zn(2+)</name>
        <dbReference type="ChEBI" id="CHEBI:29105"/>
    </ligand>
</feature>
<feature type="binding site" evidence="1">
    <location>
        <position position="292"/>
    </location>
    <ligand>
        <name>substrate</name>
    </ligand>
</feature>
<feature type="binding site" evidence="1">
    <location>
        <position position="333"/>
    </location>
    <ligand>
        <name>Zn(2+)</name>
        <dbReference type="ChEBI" id="CHEBI:29105"/>
    </ligand>
</feature>
<feature type="binding site" evidence="1">
    <location>
        <position position="409"/>
    </location>
    <ligand>
        <name>[4Fe-4S] cluster</name>
        <dbReference type="ChEBI" id="CHEBI:49883"/>
        <note>4Fe-4S-S-AdoMet</note>
    </ligand>
</feature>
<feature type="binding site" evidence="1">
    <location>
        <position position="412"/>
    </location>
    <ligand>
        <name>[4Fe-4S] cluster</name>
        <dbReference type="ChEBI" id="CHEBI:49883"/>
        <note>4Fe-4S-S-AdoMet</note>
    </ligand>
</feature>
<feature type="binding site" evidence="1">
    <location>
        <position position="416"/>
    </location>
    <ligand>
        <name>[4Fe-4S] cluster</name>
        <dbReference type="ChEBI" id="CHEBI:49883"/>
        <note>4Fe-4S-S-AdoMet</note>
    </ligand>
</feature>
<comment type="function">
    <text evidence="1">Catalyzes the synthesis of the hydroxymethylpyrimidine phosphate (HMP-P) moiety of thiamine from aminoimidazole ribotide (AIR) in a radical S-adenosyl-L-methionine (SAM)-dependent reaction.</text>
</comment>
<comment type="catalytic activity">
    <reaction evidence="1">
        <text>5-amino-1-(5-phospho-beta-D-ribosyl)imidazole + S-adenosyl-L-methionine = 4-amino-2-methyl-5-(phosphooxymethyl)pyrimidine + CO + 5'-deoxyadenosine + formate + L-methionine + 3 H(+)</text>
        <dbReference type="Rhea" id="RHEA:24840"/>
        <dbReference type="ChEBI" id="CHEBI:15378"/>
        <dbReference type="ChEBI" id="CHEBI:15740"/>
        <dbReference type="ChEBI" id="CHEBI:17245"/>
        <dbReference type="ChEBI" id="CHEBI:17319"/>
        <dbReference type="ChEBI" id="CHEBI:57844"/>
        <dbReference type="ChEBI" id="CHEBI:58354"/>
        <dbReference type="ChEBI" id="CHEBI:59789"/>
        <dbReference type="ChEBI" id="CHEBI:137981"/>
        <dbReference type="EC" id="4.1.99.17"/>
    </reaction>
</comment>
<comment type="cofactor">
    <cofactor evidence="1">
        <name>[4Fe-4S] cluster</name>
        <dbReference type="ChEBI" id="CHEBI:49883"/>
    </cofactor>
    <text evidence="1">Binds 1 [4Fe-4S] cluster per subunit. The cluster is coordinated with 3 cysteines and an exchangeable S-adenosyl-L-methionine.</text>
</comment>
<comment type="pathway">
    <text evidence="1">Cofactor biosynthesis; thiamine diphosphate biosynthesis.</text>
</comment>
<comment type="similarity">
    <text evidence="1">Belongs to the ThiC family.</text>
</comment>
<reference key="1">
    <citation type="journal article" date="2008" name="Environ. Microbiol.">
        <title>The complete genome sequence of Moorella thermoacetica (f. Clostridium thermoaceticum).</title>
        <authorList>
            <person name="Pierce E."/>
            <person name="Xie G."/>
            <person name="Barabote R.D."/>
            <person name="Saunders E."/>
            <person name="Han C.S."/>
            <person name="Detter J.C."/>
            <person name="Richardson P."/>
            <person name="Brettin T.S."/>
            <person name="Das A."/>
            <person name="Ljungdahl L.G."/>
            <person name="Ragsdale S.W."/>
        </authorList>
    </citation>
    <scope>NUCLEOTIDE SEQUENCE [LARGE SCALE GENOMIC DNA]</scope>
    <source>
        <strain>ATCC 39073 / JCM 9320</strain>
    </source>
</reference>
<keyword id="KW-0004">4Fe-4S</keyword>
<keyword id="KW-0408">Iron</keyword>
<keyword id="KW-0411">Iron-sulfur</keyword>
<keyword id="KW-0456">Lyase</keyword>
<keyword id="KW-0479">Metal-binding</keyword>
<keyword id="KW-0949">S-adenosyl-L-methionine</keyword>
<keyword id="KW-0784">Thiamine biosynthesis</keyword>
<keyword id="KW-0862">Zinc</keyword>
<gene>
    <name evidence="1" type="primary">thiC</name>
    <name type="ordered locus">Moth_1401</name>
</gene>
<proteinExistence type="inferred from homology"/>
<sequence length="432" mass="46953">MTQLEAAQVGQVTRAMEQVAAREKVRVEDLMAEVAAGRVVIPVNKNHHKLQPCGIGRGLRTKVNANLGTSTDYPDIAAELEKLQVALDAGADAVMDLSTGGDINECRRQVIARSPATVGTVPIYQATVEAQEKYGALVKMTVDDLFRVIEMQAEDGVDFITVHCGVTMEVVERLRREGRLADIVSRGGSFLTGWMLHNEQENPLYAHYDRLLEIARRYDVTLSLGDGLRPGCLADATDRAQIQELIILGELVDRAREAGVQAMVEGPGHVPLNQIQANILLEKRLCHEAPFYVLGPLVTDVAPGYDHLTAAIGGALAAAAGADFICYVTPAEHLGLPTLADVREGVIAARIAGHAADLAKGLPGAWEWDREMARARKALDWQRQIELALDPEKARQYRRARNDEGAVACSMCGDFCAMRLVGEYLGKPSETC</sequence>
<evidence type="ECO:0000255" key="1">
    <source>
        <dbReference type="HAMAP-Rule" id="MF_00089"/>
    </source>
</evidence>
<organism>
    <name type="scientific">Moorella thermoacetica (strain ATCC 39073 / JCM 9320)</name>
    <dbReference type="NCBI Taxonomy" id="264732"/>
    <lineage>
        <taxon>Bacteria</taxon>
        <taxon>Bacillati</taxon>
        <taxon>Bacillota</taxon>
        <taxon>Clostridia</taxon>
        <taxon>Moorellales</taxon>
        <taxon>Moorellaceae</taxon>
        <taxon>Moorella</taxon>
    </lineage>
</organism>
<name>THIC_MOOTA</name>
<accession>Q2RIM5</accession>